<accession>P00124</accession>
<organism>
    <name type="scientific">Prosthecochloris aestuarii</name>
    <dbReference type="NCBI Taxonomy" id="1102"/>
    <lineage>
        <taxon>Bacteria</taxon>
        <taxon>Pseudomonadati</taxon>
        <taxon>Chlorobiota</taxon>
        <taxon>Chlorobiia</taxon>
        <taxon>Chlorobiales</taxon>
        <taxon>Chlorobiaceae</taxon>
        <taxon>Prosthecochloris</taxon>
    </lineage>
</organism>
<sequence length="99" mass="10473">AVTKADVEQYDLANGKTVYDANCASCHAAGIMGAPKTGTARKWNSRLPQGLATMIEKSVAGYEGEYRGSKTFMPAKGGNPDLTDKQVGDAVAYMVNEVL</sequence>
<keyword id="KW-0903">Direct protein sequencing</keyword>
<keyword id="KW-0249">Electron transport</keyword>
<keyword id="KW-0349">Heme</keyword>
<keyword id="KW-0408">Iron</keyword>
<keyword id="KW-0479">Metal-binding</keyword>
<keyword id="KW-0602">Photosynthesis</keyword>
<keyword id="KW-0813">Transport</keyword>
<feature type="chain" id="PRO_0000108409" description="Cytochrome c-555">
    <location>
        <begin position="1"/>
        <end position="99"/>
    </location>
</feature>
<feature type="binding site" description="covalent">
    <location>
        <position position="23"/>
    </location>
    <ligand>
        <name>heme c</name>
        <dbReference type="ChEBI" id="CHEBI:61717"/>
    </ligand>
</feature>
<feature type="binding site" description="covalent">
    <location>
        <position position="26"/>
    </location>
    <ligand>
        <name>heme c</name>
        <dbReference type="ChEBI" id="CHEBI:61717"/>
    </ligand>
</feature>
<feature type="binding site" description="axial binding residue">
    <location>
        <position position="27"/>
    </location>
    <ligand>
        <name>heme c</name>
        <dbReference type="ChEBI" id="CHEBI:61717"/>
    </ligand>
    <ligandPart>
        <name>Fe</name>
        <dbReference type="ChEBI" id="CHEBI:18248"/>
    </ligandPart>
</feature>
<feature type="binding site" description="axial binding residue">
    <location>
        <position position="73"/>
    </location>
    <ligand>
        <name>heme c</name>
        <dbReference type="ChEBI" id="CHEBI:61717"/>
    </ligand>
    <ligandPart>
        <name>Fe</name>
        <dbReference type="ChEBI" id="CHEBI:18248"/>
    </ligandPart>
</feature>
<reference key="1">
    <citation type="journal article" date="1976" name="Biochem. J.">
        <title>The amino acid sequences of the cytochromes c-555 from two green sulphur bacteria of the genus Chlorobium.</title>
        <authorList>
            <person name="van Beeumen J."/>
            <person name="Ambler R.P."/>
            <person name="Meyer T.E."/>
            <person name="Kamen M.D."/>
            <person name="Olson J.M."/>
            <person name="Shaw E.K."/>
        </authorList>
    </citation>
    <scope>PROTEIN SEQUENCE</scope>
</reference>
<reference key="2">
    <citation type="journal article" date="1978" name="Int. J. Syst. Bacteriol.">
        <title>Confused history of Chloropseudomonas ethylica 2K.</title>
        <authorList>
            <person name="Olson J.M."/>
        </authorList>
    </citation>
    <scope>TAXONOMY</scope>
</reference>
<dbReference type="PIR" id="A00117">
    <property type="entry name" value="CCPH55"/>
</dbReference>
<dbReference type="SMR" id="P00124"/>
<dbReference type="GO" id="GO:0009055">
    <property type="term" value="F:electron transfer activity"/>
    <property type="evidence" value="ECO:0007669"/>
    <property type="project" value="InterPro"/>
</dbReference>
<dbReference type="GO" id="GO:0020037">
    <property type="term" value="F:heme binding"/>
    <property type="evidence" value="ECO:0007669"/>
    <property type="project" value="InterPro"/>
</dbReference>
<dbReference type="GO" id="GO:0005506">
    <property type="term" value="F:iron ion binding"/>
    <property type="evidence" value="ECO:0007669"/>
    <property type="project" value="InterPro"/>
</dbReference>
<dbReference type="GO" id="GO:0015979">
    <property type="term" value="P:photosynthesis"/>
    <property type="evidence" value="ECO:0007669"/>
    <property type="project" value="UniProtKB-KW"/>
</dbReference>
<dbReference type="Gene3D" id="1.10.760.10">
    <property type="entry name" value="Cytochrome c-like domain"/>
    <property type="match status" value="1"/>
</dbReference>
<dbReference type="InterPro" id="IPR009056">
    <property type="entry name" value="Cyt_c-like_dom"/>
</dbReference>
<dbReference type="InterPro" id="IPR036909">
    <property type="entry name" value="Cyt_c-like_dom_sf"/>
</dbReference>
<dbReference type="InterPro" id="IPR002323">
    <property type="entry name" value="Cyt_CIE"/>
</dbReference>
<dbReference type="PANTHER" id="PTHR40942">
    <property type="match status" value="1"/>
</dbReference>
<dbReference type="PANTHER" id="PTHR40942:SF4">
    <property type="entry name" value="CYTOCHROME C5"/>
    <property type="match status" value="1"/>
</dbReference>
<dbReference type="Pfam" id="PF00034">
    <property type="entry name" value="Cytochrom_C"/>
    <property type="match status" value="1"/>
</dbReference>
<dbReference type="PRINTS" id="PR00607">
    <property type="entry name" value="CYTCHROMECIE"/>
</dbReference>
<dbReference type="SUPFAM" id="SSF46626">
    <property type="entry name" value="Cytochrome c"/>
    <property type="match status" value="1"/>
</dbReference>
<dbReference type="PROSITE" id="PS51007">
    <property type="entry name" value="CYTC"/>
    <property type="match status" value="1"/>
</dbReference>
<proteinExistence type="evidence at protein level"/>
<name>C555_PROAE</name>
<protein>
    <recommendedName>
        <fullName>Cytochrome c-555</fullName>
    </recommendedName>
    <alternativeName>
        <fullName>Cytochrome c555</fullName>
    </alternativeName>
</protein>
<comment type="PTM">
    <text>Binds 1 heme c group covalently per subunit.</text>
</comment>